<gene>
    <name evidence="1" type="primary">fbpC</name>
    <name type="synonym">sfuC</name>
</gene>
<dbReference type="EC" id="7.2.2.7" evidence="1"/>
<dbReference type="EMBL" id="M33815">
    <property type="protein sequence ID" value="AAA26575.1"/>
    <property type="molecule type" value="Genomic_DNA"/>
</dbReference>
<dbReference type="PIR" id="C35108">
    <property type="entry name" value="QRSEUC"/>
</dbReference>
<dbReference type="SMR" id="P21410"/>
<dbReference type="STRING" id="273526.SMDB11_1781"/>
<dbReference type="TCDB" id="3.A.1.10.1">
    <property type="family name" value="the atp-binding cassette (abc) superfamily"/>
</dbReference>
<dbReference type="GO" id="GO:0043190">
    <property type="term" value="C:ATP-binding cassette (ABC) transporter complex"/>
    <property type="evidence" value="ECO:0007669"/>
    <property type="project" value="InterPro"/>
</dbReference>
<dbReference type="GO" id="GO:0015408">
    <property type="term" value="F:ABC-type ferric iron transporter activity"/>
    <property type="evidence" value="ECO:0007669"/>
    <property type="project" value="UniProtKB-EC"/>
</dbReference>
<dbReference type="GO" id="GO:0005524">
    <property type="term" value="F:ATP binding"/>
    <property type="evidence" value="ECO:0007669"/>
    <property type="project" value="UniProtKB-KW"/>
</dbReference>
<dbReference type="GO" id="GO:0016887">
    <property type="term" value="F:ATP hydrolysis activity"/>
    <property type="evidence" value="ECO:0007669"/>
    <property type="project" value="InterPro"/>
</dbReference>
<dbReference type="CDD" id="cd03259">
    <property type="entry name" value="ABC_Carb_Solutes_like"/>
    <property type="match status" value="1"/>
</dbReference>
<dbReference type="FunFam" id="3.40.50.300:FF:000425">
    <property type="entry name" value="Probable ABC transporter, ATP-binding subunit"/>
    <property type="match status" value="1"/>
</dbReference>
<dbReference type="Gene3D" id="2.40.50.450">
    <property type="match status" value="1"/>
</dbReference>
<dbReference type="Gene3D" id="3.40.50.300">
    <property type="entry name" value="P-loop containing nucleotide triphosphate hydrolases"/>
    <property type="match status" value="1"/>
</dbReference>
<dbReference type="InterPro" id="IPR003593">
    <property type="entry name" value="AAA+_ATPase"/>
</dbReference>
<dbReference type="InterPro" id="IPR050093">
    <property type="entry name" value="ABC_SmlMolc_Importer"/>
</dbReference>
<dbReference type="InterPro" id="IPR003439">
    <property type="entry name" value="ABC_transporter-like_ATP-bd"/>
</dbReference>
<dbReference type="InterPro" id="IPR017871">
    <property type="entry name" value="ABC_transporter-like_CS"/>
</dbReference>
<dbReference type="InterPro" id="IPR015853">
    <property type="entry name" value="ABC_transpr_FbpC"/>
</dbReference>
<dbReference type="InterPro" id="IPR008995">
    <property type="entry name" value="Mo/tungstate-bd_C_term_dom"/>
</dbReference>
<dbReference type="InterPro" id="IPR027417">
    <property type="entry name" value="P-loop_NTPase"/>
</dbReference>
<dbReference type="InterPro" id="IPR013611">
    <property type="entry name" value="Transp-assoc_OB_typ2"/>
</dbReference>
<dbReference type="PANTHER" id="PTHR42781">
    <property type="entry name" value="SPERMIDINE/PUTRESCINE IMPORT ATP-BINDING PROTEIN POTA"/>
    <property type="match status" value="1"/>
</dbReference>
<dbReference type="PANTHER" id="PTHR42781:SF4">
    <property type="entry name" value="SPERMIDINE_PUTRESCINE IMPORT ATP-BINDING PROTEIN POTA"/>
    <property type="match status" value="1"/>
</dbReference>
<dbReference type="Pfam" id="PF00005">
    <property type="entry name" value="ABC_tran"/>
    <property type="match status" value="1"/>
</dbReference>
<dbReference type="Pfam" id="PF08402">
    <property type="entry name" value="TOBE_2"/>
    <property type="match status" value="1"/>
</dbReference>
<dbReference type="SMART" id="SM00382">
    <property type="entry name" value="AAA"/>
    <property type="match status" value="1"/>
</dbReference>
<dbReference type="SUPFAM" id="SSF50331">
    <property type="entry name" value="MOP-like"/>
    <property type="match status" value="1"/>
</dbReference>
<dbReference type="SUPFAM" id="SSF52540">
    <property type="entry name" value="P-loop containing nucleoside triphosphate hydrolases"/>
    <property type="match status" value="1"/>
</dbReference>
<dbReference type="PROSITE" id="PS00211">
    <property type="entry name" value="ABC_TRANSPORTER_1"/>
    <property type="match status" value="1"/>
</dbReference>
<dbReference type="PROSITE" id="PS50893">
    <property type="entry name" value="ABC_TRANSPORTER_2"/>
    <property type="match status" value="1"/>
</dbReference>
<dbReference type="PROSITE" id="PS51242">
    <property type="entry name" value="FBPC"/>
    <property type="match status" value="1"/>
</dbReference>
<organism>
    <name type="scientific">Serratia marcescens</name>
    <dbReference type="NCBI Taxonomy" id="615"/>
    <lineage>
        <taxon>Bacteria</taxon>
        <taxon>Pseudomonadati</taxon>
        <taxon>Pseudomonadota</taxon>
        <taxon>Gammaproteobacteria</taxon>
        <taxon>Enterobacterales</taxon>
        <taxon>Yersiniaceae</taxon>
        <taxon>Serratia</taxon>
    </lineage>
</organism>
<evidence type="ECO:0000255" key="1">
    <source>
        <dbReference type="HAMAP-Rule" id="MF_01706"/>
    </source>
</evidence>
<proteinExistence type="inferred from homology"/>
<sequence length="345" mass="36692">MSTLELHGIGKSYNAIRVLEHIDLQVAAGSRTAIVGPSGSGKTTLLRIIAGFEIPDGGQILLQGQAMGNGSGWVPAHLRGIGFVPQDGALFPHFTVAGNIGFGLKGGKREKQRRIEALMEMVALDRRLAALWPHELSGGQQQRVALARALSQQPRLMLLDEPFSALDTGLRAATRKAVAELLTEAKVASILVTHDQSEALSFADQVAVMRSGRLAQVGAPQDLYLRPVDEPTASFLGETLVLTAELAHGWADCALGRIAVDDRQRSGPARIMLRPEQIQIGLSDPAQRGQAVITGIDFAGFVSTLNLQMAATGAQLEIKTVSREGLRPGAQVTLNVMGQAHIFAG</sequence>
<comment type="function">
    <text evidence="1">Part of the ABC transporter complex FbpABC involved in Fe(3+) ions import. Responsible for energy coupling to the transport system.</text>
</comment>
<comment type="catalytic activity">
    <reaction evidence="1">
        <text>Fe(3+)(out) + ATP + H2O = Fe(3+)(in) + ADP + phosphate + H(+)</text>
        <dbReference type="Rhea" id="RHEA:12332"/>
        <dbReference type="ChEBI" id="CHEBI:15377"/>
        <dbReference type="ChEBI" id="CHEBI:15378"/>
        <dbReference type="ChEBI" id="CHEBI:29034"/>
        <dbReference type="ChEBI" id="CHEBI:30616"/>
        <dbReference type="ChEBI" id="CHEBI:43474"/>
        <dbReference type="ChEBI" id="CHEBI:456216"/>
        <dbReference type="EC" id="7.2.2.7"/>
    </reaction>
</comment>
<comment type="subunit">
    <text evidence="1">The complex is composed of two ATP-binding proteins (FbpC), two transmembrane proteins (FbpB) and a solute-binding protein (FbpA).</text>
</comment>
<comment type="subcellular location">
    <subcellularLocation>
        <location evidence="1">Cell inner membrane</location>
        <topology evidence="1">Peripheral membrane protein</topology>
    </subcellularLocation>
</comment>
<comment type="similarity">
    <text evidence="1">Belongs to the ABC transporter superfamily. Fe(3+) ion importer (TC 3.A.1.10) family.</text>
</comment>
<reference key="1">
    <citation type="journal article" date="1990" name="J. Bacteriol.">
        <title>Nucleotide sequences of the sfuA, sfuB, and sfuC genes of Serratia marcescens suggest a periplasmic-binding-protein-dependent iron transport mechanism.</title>
        <authorList>
            <person name="Angerer A."/>
            <person name="Gaisser S."/>
            <person name="Braun V."/>
        </authorList>
    </citation>
    <scope>NUCLEOTIDE SEQUENCE [GENOMIC DNA]</scope>
</reference>
<accession>P21410</accession>
<feature type="chain" id="PRO_0000092364" description="Fe(3+) ions import ATP-binding protein FbpC">
    <location>
        <begin position="1"/>
        <end position="345"/>
    </location>
</feature>
<feature type="domain" description="ABC transporter" evidence="1">
    <location>
        <begin position="4"/>
        <end position="236"/>
    </location>
</feature>
<feature type="binding site" evidence="1">
    <location>
        <begin position="36"/>
        <end position="43"/>
    </location>
    <ligand>
        <name>ATP</name>
        <dbReference type="ChEBI" id="CHEBI:30616"/>
    </ligand>
</feature>
<name>FBPC_SERMA</name>
<protein>
    <recommendedName>
        <fullName evidence="1">Fe(3+) ions import ATP-binding protein FbpC</fullName>
        <ecNumber evidence="1">7.2.2.7</ecNumber>
    </recommendedName>
</protein>
<keyword id="KW-0067">ATP-binding</keyword>
<keyword id="KW-0997">Cell inner membrane</keyword>
<keyword id="KW-1003">Cell membrane</keyword>
<keyword id="KW-0406">Ion transport</keyword>
<keyword id="KW-0408">Iron</keyword>
<keyword id="KW-0410">Iron transport</keyword>
<keyword id="KW-0472">Membrane</keyword>
<keyword id="KW-0547">Nucleotide-binding</keyword>
<keyword id="KW-1278">Translocase</keyword>
<keyword id="KW-0813">Transport</keyword>